<reference key="1">
    <citation type="journal article" date="1993" name="Proc. Natl. Acad. Sci. U.S.A.">
        <title>PMT1, the gene for a key enzyme of protein O-glycosylation in Saccharomyces cerevisiae.</title>
        <authorList>
            <person name="Strahl-Bolsinger S."/>
            <person name="Immervoll T."/>
            <person name="Deutzmann R."/>
            <person name="Tanner W."/>
        </authorList>
    </citation>
    <scope>NUCLEOTIDE SEQUENCE [GENOMIC DNA]</scope>
    <scope>PARTIAL PROTEIN SEQUENCE</scope>
    <scope>IDENTIFICATION</scope>
    <scope>FUNCTION</scope>
    <scope>CATALYTIC ACTIVITY</scope>
</reference>
<reference key="2">
    <citation type="journal article" date="1996" name="Yeast">
        <title>The sequence of a 16,691 bp segment of Saccharomyces cerevisiae chromosome IV identifies the DUN1, PMT1, PMT5, SRP14 and DPR1 genes, and five new open reading frames.</title>
        <authorList>
            <person name="Boskovic J."/>
            <person name="Soler-Mira A."/>
            <person name="Garcia-Cantalejo J.M."/>
            <person name="Ballesta J.P.G."/>
            <person name="Jimenez A."/>
            <person name="Remacha M.A."/>
        </authorList>
    </citation>
    <scope>NUCLEOTIDE SEQUENCE [GENOMIC DNA]</scope>
    <source>
        <strain>ATCC 96604 / S288c / FY1679</strain>
    </source>
</reference>
<reference key="3">
    <citation type="journal article" date="1997" name="Nature">
        <title>The nucleotide sequence of Saccharomyces cerevisiae chromosome IV.</title>
        <authorList>
            <person name="Jacq C."/>
            <person name="Alt-Moerbe J."/>
            <person name="Andre B."/>
            <person name="Arnold W."/>
            <person name="Bahr A."/>
            <person name="Ballesta J.P.G."/>
            <person name="Bargues M."/>
            <person name="Baron L."/>
            <person name="Becker A."/>
            <person name="Biteau N."/>
            <person name="Bloecker H."/>
            <person name="Blugeon C."/>
            <person name="Boskovic J."/>
            <person name="Brandt P."/>
            <person name="Brueckner M."/>
            <person name="Buitrago M.J."/>
            <person name="Coster F."/>
            <person name="Delaveau T."/>
            <person name="del Rey F."/>
            <person name="Dujon B."/>
            <person name="Eide L.G."/>
            <person name="Garcia-Cantalejo J.M."/>
            <person name="Goffeau A."/>
            <person name="Gomez-Peris A."/>
            <person name="Granotier C."/>
            <person name="Hanemann V."/>
            <person name="Hankeln T."/>
            <person name="Hoheisel J.D."/>
            <person name="Jaeger W."/>
            <person name="Jimenez A."/>
            <person name="Jonniaux J.-L."/>
            <person name="Kraemer C."/>
            <person name="Kuester H."/>
            <person name="Laamanen P."/>
            <person name="Legros Y."/>
            <person name="Louis E.J."/>
            <person name="Moeller-Rieker S."/>
            <person name="Monnet A."/>
            <person name="Moro M."/>
            <person name="Mueller-Auer S."/>
            <person name="Nussbaumer B."/>
            <person name="Paricio N."/>
            <person name="Paulin L."/>
            <person name="Perea J."/>
            <person name="Perez-Alonso M."/>
            <person name="Perez-Ortin J.E."/>
            <person name="Pohl T.M."/>
            <person name="Prydz H."/>
            <person name="Purnelle B."/>
            <person name="Rasmussen S.W."/>
            <person name="Remacha M.A."/>
            <person name="Revuelta J.L."/>
            <person name="Rieger M."/>
            <person name="Salom D."/>
            <person name="Saluz H.P."/>
            <person name="Saiz J.E."/>
            <person name="Saren A.-M."/>
            <person name="Schaefer M."/>
            <person name="Scharfe M."/>
            <person name="Schmidt E.R."/>
            <person name="Schneider C."/>
            <person name="Scholler P."/>
            <person name="Schwarz S."/>
            <person name="Soler-Mira A."/>
            <person name="Urrestarazu L.A."/>
            <person name="Verhasselt P."/>
            <person name="Vissers S."/>
            <person name="Voet M."/>
            <person name="Volckaert G."/>
            <person name="Wagner G."/>
            <person name="Wambutt R."/>
            <person name="Wedler E."/>
            <person name="Wedler H."/>
            <person name="Woelfl S."/>
            <person name="Harris D.E."/>
            <person name="Bowman S."/>
            <person name="Brown D."/>
            <person name="Churcher C.M."/>
            <person name="Connor R."/>
            <person name="Dedman K."/>
            <person name="Gentles S."/>
            <person name="Hamlin N."/>
            <person name="Hunt S."/>
            <person name="Jones L."/>
            <person name="McDonald S."/>
            <person name="Murphy L.D."/>
            <person name="Niblett D."/>
            <person name="Odell C."/>
            <person name="Oliver K."/>
            <person name="Rajandream M.A."/>
            <person name="Richards C."/>
            <person name="Shore L."/>
            <person name="Walsh S.V."/>
            <person name="Barrell B.G."/>
            <person name="Dietrich F.S."/>
            <person name="Mulligan J.T."/>
            <person name="Allen E."/>
            <person name="Araujo R."/>
            <person name="Aviles E."/>
            <person name="Berno A."/>
            <person name="Carpenter J."/>
            <person name="Chen E."/>
            <person name="Cherry J.M."/>
            <person name="Chung E."/>
            <person name="Duncan M."/>
            <person name="Hunicke-Smith S."/>
            <person name="Hyman R.W."/>
            <person name="Komp C."/>
            <person name="Lashkari D."/>
            <person name="Lew H."/>
            <person name="Lin D."/>
            <person name="Mosedale D."/>
            <person name="Nakahara K."/>
            <person name="Namath A."/>
            <person name="Oefner P."/>
            <person name="Oh C."/>
            <person name="Petel F.X."/>
            <person name="Roberts D."/>
            <person name="Schramm S."/>
            <person name="Schroeder M."/>
            <person name="Shogren T."/>
            <person name="Shroff N."/>
            <person name="Winant A."/>
            <person name="Yelton M.A."/>
            <person name="Botstein D."/>
            <person name="Davis R.W."/>
            <person name="Johnston M."/>
            <person name="Andrews S."/>
            <person name="Brinkman R."/>
            <person name="Cooper J."/>
            <person name="Ding H."/>
            <person name="Du Z."/>
            <person name="Favello A."/>
            <person name="Fulton L."/>
            <person name="Gattung S."/>
            <person name="Greco T."/>
            <person name="Hallsworth K."/>
            <person name="Hawkins J."/>
            <person name="Hillier L.W."/>
            <person name="Jier M."/>
            <person name="Johnson D."/>
            <person name="Johnston L."/>
            <person name="Kirsten J."/>
            <person name="Kucaba T."/>
            <person name="Langston Y."/>
            <person name="Latreille P."/>
            <person name="Le T."/>
            <person name="Mardis E."/>
            <person name="Menezes S."/>
            <person name="Miller N."/>
            <person name="Nhan M."/>
            <person name="Pauley A."/>
            <person name="Peluso D."/>
            <person name="Rifkin L."/>
            <person name="Riles L."/>
            <person name="Taich A."/>
            <person name="Trevaskis E."/>
            <person name="Vignati D."/>
            <person name="Wilcox L."/>
            <person name="Wohldman P."/>
            <person name="Vaudin M."/>
            <person name="Wilson R."/>
            <person name="Waterston R."/>
            <person name="Albermann K."/>
            <person name="Hani J."/>
            <person name="Heumann K."/>
            <person name="Kleine K."/>
            <person name="Mewes H.-W."/>
            <person name="Zollner A."/>
            <person name="Zaccaria P."/>
        </authorList>
    </citation>
    <scope>NUCLEOTIDE SEQUENCE [LARGE SCALE GENOMIC DNA]</scope>
    <source>
        <strain>ATCC 204508 / S288c</strain>
    </source>
</reference>
<reference key="4">
    <citation type="journal article" date="2014" name="G3 (Bethesda)">
        <title>The reference genome sequence of Saccharomyces cerevisiae: Then and now.</title>
        <authorList>
            <person name="Engel S.R."/>
            <person name="Dietrich F.S."/>
            <person name="Fisk D.G."/>
            <person name="Binkley G."/>
            <person name="Balakrishnan R."/>
            <person name="Costanzo M.C."/>
            <person name="Dwight S.S."/>
            <person name="Hitz B.C."/>
            <person name="Karra K."/>
            <person name="Nash R.S."/>
            <person name="Weng S."/>
            <person name="Wong E.D."/>
            <person name="Lloyd P."/>
            <person name="Skrzypek M.S."/>
            <person name="Miyasato S.R."/>
            <person name="Simison M."/>
            <person name="Cherry J.M."/>
        </authorList>
    </citation>
    <scope>GENOME REANNOTATION</scope>
    <source>
        <strain>ATCC 204508 / S288c</strain>
    </source>
</reference>
<reference key="5">
    <citation type="journal article" date="1995" name="FEBS Lett.">
        <title>Protein O-glycosylation in Saccharomyces cerevisiae: the protein O-mannosyltransferases Pmt1p and Pmt2p function as heterodimer.</title>
        <authorList>
            <person name="Gentzsch M."/>
            <person name="Immervoll T."/>
            <person name="Tanner W."/>
        </authorList>
    </citation>
    <scope>FUNCTION</scope>
    <scope>INTERACTION WITH PMT2</scope>
</reference>
<reference key="6">
    <citation type="journal article" date="1996" name="EMBO J.">
        <title>The PMT gene family: protein O-glycosylation in Saccharomyces cerevisiae is vital.</title>
        <authorList>
            <person name="Gaentzsch M."/>
            <person name="Tanner W."/>
        </authorList>
    </citation>
    <scope>DISRUPTION PHENOTYPE</scope>
</reference>
<reference key="7">
    <citation type="journal article" date="1998" name="Mol. Microbiol.">
        <title>Pmt1 mannosyl transferase is involved in cell wall incorporation of several proteins in Saccharomyces cerevisiae.</title>
        <authorList>
            <person name="Bourdineaud J.P."/>
            <person name="van der Vaart J.M."/>
            <person name="Donzeau M."/>
            <person name="de Sampaio G."/>
            <person name="Verrips C.T."/>
            <person name="Lauquin G.J."/>
        </authorList>
    </citation>
    <scope>FUNCTION</scope>
</reference>
<reference key="8">
    <citation type="journal article" date="1999" name="J. Biol. Chem.">
        <title>Transmembrane topology of pmt1p, a member of an evolutionarily conserved family of protein O-mannosyltransferases.</title>
        <authorList>
            <person name="Strahl-Bolsinger S."/>
            <person name="Scheinost A."/>
        </authorList>
    </citation>
    <scope>SUBCELLULAR LOCATION</scope>
    <scope>TOPOLOGY</scope>
</reference>
<reference key="9">
    <citation type="journal article" date="2000" name="J. Biol. Chem.">
        <title>Structure-function analysis of the dolichyl phosphate-mannose: protein O-mannosyltransferase ScPmt1p.</title>
        <authorList>
            <person name="Girrbach V."/>
            <person name="Zeller T."/>
            <person name="Priesmeier M."/>
            <person name="Strahl-Bolsinger S."/>
        </authorList>
    </citation>
    <scope>FUNCTION</scope>
    <scope>CATALYTIC ACTIVITY</scope>
    <scope>DOMAIN</scope>
    <scope>MUTAGENESIS OF ARG-64; GLU-78; ARG-138 AND LEU-408</scope>
</reference>
<reference key="10">
    <citation type="journal article" date="2003" name="J. Biol. Chem.">
        <title>Members of the evolutionarily conserved PMT family of protein O-mannosyltransferases form distinct protein complexes among themselves.</title>
        <authorList>
            <person name="Girrbach V."/>
            <person name="Strahl S."/>
        </authorList>
    </citation>
    <scope>INTERACTION WITH PMT2 AND PMT3</scope>
</reference>
<reference key="11">
    <citation type="journal article" date="2003" name="Nature">
        <title>Global analysis of protein expression in yeast.</title>
        <authorList>
            <person name="Ghaemmaghami S."/>
            <person name="Huh W.-K."/>
            <person name="Bower K."/>
            <person name="Howson R.W."/>
            <person name="Belle A."/>
            <person name="Dephoure N."/>
            <person name="O'Shea E.K."/>
            <person name="Weissman J.S."/>
        </authorList>
    </citation>
    <scope>LEVEL OF PROTEIN EXPRESSION [LARGE SCALE ANALYSIS]</scope>
</reference>
<reference key="12">
    <citation type="journal article" date="2006" name="Proc. Natl. Acad. Sci. U.S.A.">
        <title>A global topology map of the Saccharomyces cerevisiae membrane proteome.</title>
        <authorList>
            <person name="Kim H."/>
            <person name="Melen K."/>
            <person name="Oesterberg M."/>
            <person name="von Heijne G."/>
        </authorList>
    </citation>
    <scope>TOPOLOGY [LARGE SCALE ANALYSIS]</scope>
    <source>
        <strain>ATCC 208353 / W303-1A</strain>
    </source>
</reference>
<reference key="13">
    <citation type="journal article" date="2008" name="J. Biochem.">
        <title>O-mannosylation is required for degradation of the endoplasmic reticulum-associated degradation substrate Gas1*p via the ubiquitin/proteasome pathway in Saccharomyces cerevisiae.</title>
        <authorList>
            <person name="Hirayama H."/>
            <person name="Fujita M."/>
            <person name="Yoko-o T."/>
            <person name="Jigami Y."/>
        </authorList>
    </citation>
    <scope>FUNCTION</scope>
</reference>
<reference key="14">
    <citation type="journal article" date="2011" name="J. Biol. Chem.">
        <title>A conserved acidic motif is crucial for enzymatic activity of protein O-mannosyltransferases.</title>
        <authorList>
            <person name="Lommel M."/>
            <person name="Schott A."/>
            <person name="Jank T."/>
            <person name="Hofmann V."/>
            <person name="Strahl S."/>
        </authorList>
    </citation>
    <scope>FUNCTION</scope>
    <scope>CATALYTIC ACTIVITY</scope>
    <scope>MUTAGENESIS OF 77-ASP-GLU-78; GLU-78; TYR-88 AND PRO-100</scope>
</reference>
<reference key="15">
    <citation type="journal article" date="2011" name="J. Cell Sci.">
        <title>Protein O-mannosyltransferases participate in ER protein quality control.</title>
        <authorList>
            <person name="Goder V."/>
            <person name="Melero A."/>
        </authorList>
    </citation>
    <scope>FUNCTION OF THE PMT1-PMT2 COMPLEX</scope>
    <scope>INTERACTION WITH PMT2; EMP24; ERV25; ERP1; ERP2; CDC48; HRD1; USA1; YOS9; ERO1; PDI1; UBR1; CUE4; DFM1 AND TED1</scope>
</reference>
<reference key="16">
    <citation type="journal article" date="2012" name="Proc. Natl. Acad. Sci. U.S.A.">
        <title>N-terminal acetylome analyses and functional insights of the N-terminal acetyltransferase NatB.</title>
        <authorList>
            <person name="Van Damme P."/>
            <person name="Lasa M."/>
            <person name="Polevoda B."/>
            <person name="Gazquez C."/>
            <person name="Elosegui-Artola A."/>
            <person name="Kim D.S."/>
            <person name="De Juan-Pardo E."/>
            <person name="Demeyer K."/>
            <person name="Hole K."/>
            <person name="Larrea E."/>
            <person name="Timmerman E."/>
            <person name="Prieto J."/>
            <person name="Arnesen T."/>
            <person name="Sherman F."/>
            <person name="Gevaert K."/>
            <person name="Aldabe R."/>
        </authorList>
    </citation>
    <scope>ACETYLATION [LARGE SCALE ANALYSIS] AT SER-2</scope>
    <scope>CLEAVAGE OF INITIATOR METHIONINE [LARGE SCALE ANALYSIS]</scope>
    <scope>IDENTIFICATION BY MASS SPECTROMETRY [LARGE SCALE ANALYSIS]</scope>
</reference>
<organism>
    <name type="scientific">Saccharomyces cerevisiae (strain ATCC 204508 / S288c)</name>
    <name type="common">Baker's yeast</name>
    <dbReference type="NCBI Taxonomy" id="559292"/>
    <lineage>
        <taxon>Eukaryota</taxon>
        <taxon>Fungi</taxon>
        <taxon>Dikarya</taxon>
        <taxon>Ascomycota</taxon>
        <taxon>Saccharomycotina</taxon>
        <taxon>Saccharomycetes</taxon>
        <taxon>Saccharomycetales</taxon>
        <taxon>Saccharomycetaceae</taxon>
        <taxon>Saccharomyces</taxon>
    </lineage>
</organism>
<feature type="initiator methionine" description="Removed" evidence="18">
    <location>
        <position position="1"/>
    </location>
</feature>
<feature type="chain" id="PRO_0000121491" description="Dolichyl-phosphate-mannose--protein mannosyltransferase 1">
    <location>
        <begin position="2"/>
        <end position="817"/>
    </location>
</feature>
<feature type="topological domain" description="Cytoplasmic" evidence="3">
    <location>
        <begin position="2"/>
        <end position="50"/>
    </location>
</feature>
<feature type="transmembrane region" description="Helical" evidence="3">
    <location>
        <begin position="51"/>
        <end position="70"/>
    </location>
</feature>
<feature type="topological domain" description="Lumenal" evidence="3">
    <location>
        <begin position="71"/>
        <end position="135"/>
    </location>
</feature>
<feature type="transmembrane region" description="Helical" evidence="3">
    <location>
        <begin position="136"/>
        <end position="154"/>
    </location>
</feature>
<feature type="topological domain" description="Cytoplasmic" evidence="3">
    <location>
        <begin position="155"/>
        <end position="179"/>
    </location>
</feature>
<feature type="transmembrane region" description="Helical" evidence="3">
    <location>
        <begin position="180"/>
        <end position="200"/>
    </location>
</feature>
<feature type="topological domain" description="Lumenal" evidence="3">
    <location>
        <begin position="201"/>
        <end position="234"/>
    </location>
</feature>
<feature type="transmembrane region" description="Helical" evidence="3">
    <location>
        <begin position="235"/>
        <end position="259"/>
    </location>
</feature>
<feature type="topological domain" description="Cytoplasmic" evidence="3">
    <location>
        <begin position="260"/>
        <end position="273"/>
    </location>
</feature>
<feature type="transmembrane region" description="Helical" evidence="3">
    <location>
        <begin position="274"/>
        <end position="291"/>
    </location>
</feature>
<feature type="topological domain" description="Lumenal" evidence="3">
    <location>
        <begin position="292"/>
        <end position="584"/>
    </location>
</feature>
<feature type="transmembrane region" description="Helical" evidence="3">
    <location>
        <begin position="585"/>
        <end position="605"/>
    </location>
</feature>
<feature type="topological domain" description="Cytoplasmic" evidence="3">
    <location>
        <begin position="606"/>
        <end position="685"/>
    </location>
</feature>
<feature type="transmembrane region" description="Helical" evidence="3">
    <location>
        <begin position="686"/>
        <end position="710"/>
    </location>
</feature>
<feature type="topological domain" description="Lumenal" evidence="3">
    <location>
        <begin position="711"/>
        <end position="817"/>
    </location>
</feature>
<feature type="domain" description="MIR 1" evidence="2">
    <location>
        <begin position="324"/>
        <end position="378"/>
    </location>
</feature>
<feature type="domain" description="MIR 2" evidence="2">
    <location>
        <begin position="388"/>
        <end position="448"/>
    </location>
</feature>
<feature type="domain" description="MIR 3" evidence="2">
    <location>
        <begin position="459"/>
        <end position="514"/>
    </location>
</feature>
<feature type="modified residue" description="N-acetylserine" evidence="18">
    <location>
        <position position="2"/>
    </location>
</feature>
<feature type="glycosylation site" description="N-linked (GlcNAc...) asparagine" evidence="1">
    <location>
        <position position="390"/>
    </location>
</feature>
<feature type="glycosylation site" description="N-linked (GlcNAc...) asparagine" evidence="1">
    <location>
        <position position="513"/>
    </location>
</feature>
<feature type="glycosylation site" description="N-linked (GlcNAc...) asparagine" evidence="1">
    <location>
        <position position="743"/>
    </location>
</feature>
<feature type="mutagenesis site" description="Reduces mannosyltransferase activity." evidence="4">
    <original>R</original>
    <variation>A</variation>
    <location>
        <position position="64"/>
    </location>
</feature>
<feature type="mutagenesis site" description="Impairs mannosyltransferase activity." evidence="9">
    <original>DE</original>
    <variation>AA</variation>
    <location>
        <begin position="77"/>
        <end position="78"/>
    </location>
</feature>
<feature type="mutagenesis site" description="Decreases substrate-binding and reduces mannosyltransferase activity." evidence="4 9">
    <original>E</original>
    <variation>A</variation>
    <location>
        <position position="78"/>
    </location>
</feature>
<feature type="mutagenesis site" description="Moderately decreases complex formation with PMT2." evidence="9">
    <original>Y</original>
    <variation>A</variation>
    <location>
        <position position="88"/>
    </location>
</feature>
<feature type="mutagenesis site" description="Moderately decreases complex formation with PMT2." evidence="9">
    <original>P</original>
    <variation>A</variation>
    <location>
        <position position="100"/>
    </location>
</feature>
<feature type="mutagenesis site" description="Impairs complex formation with PMT2." evidence="4">
    <original>R</original>
    <variation>A</variation>
    <location>
        <position position="138"/>
    </location>
</feature>
<feature type="mutagenesis site" description="Reduces mannosyltransferase activity." evidence="4">
    <original>L</original>
    <variation>A</variation>
    <location>
        <position position="408"/>
    </location>
</feature>
<feature type="strand" evidence="19">
    <location>
        <begin position="21"/>
        <end position="23"/>
    </location>
</feature>
<feature type="strand" evidence="19">
    <location>
        <begin position="25"/>
        <end position="30"/>
    </location>
</feature>
<feature type="helix" evidence="19">
    <location>
        <begin position="36"/>
        <end position="41"/>
    </location>
</feature>
<feature type="helix" evidence="19">
    <location>
        <begin position="47"/>
        <end position="63"/>
    </location>
</feature>
<feature type="turn" evidence="19">
    <location>
        <begin position="64"/>
        <end position="69"/>
    </location>
</feature>
<feature type="helix" evidence="19">
    <location>
        <begin position="78"/>
        <end position="90"/>
    </location>
</feature>
<feature type="helix" evidence="19">
    <location>
        <begin position="101"/>
        <end position="112"/>
    </location>
</feature>
<feature type="helix" evidence="19">
    <location>
        <begin position="135"/>
        <end position="158"/>
    </location>
</feature>
<feature type="helix" evidence="19">
    <location>
        <begin position="163"/>
        <end position="174"/>
    </location>
</feature>
<feature type="helix" evidence="19">
    <location>
        <begin position="177"/>
        <end position="184"/>
    </location>
</feature>
<feature type="helix" evidence="19">
    <location>
        <begin position="189"/>
        <end position="207"/>
    </location>
</feature>
<feature type="strand" evidence="19">
    <location>
        <begin position="211"/>
        <end position="213"/>
    </location>
</feature>
<feature type="helix" evidence="19">
    <location>
        <begin position="214"/>
        <end position="231"/>
    </location>
</feature>
<feature type="helix" evidence="19">
    <location>
        <begin position="237"/>
        <end position="257"/>
    </location>
</feature>
<feature type="strand" evidence="19">
    <location>
        <begin position="259"/>
        <end position="261"/>
    </location>
</feature>
<feature type="helix" evidence="19">
    <location>
        <begin position="263"/>
        <end position="295"/>
    </location>
</feature>
<feature type="turn" evidence="19">
    <location>
        <begin position="302"/>
        <end position="305"/>
    </location>
</feature>
<feature type="turn" evidence="19">
    <location>
        <begin position="308"/>
        <end position="310"/>
    </location>
</feature>
<feature type="helix" evidence="19">
    <location>
        <begin position="311"/>
        <end position="313"/>
    </location>
</feature>
<feature type="strand" evidence="19">
    <location>
        <begin position="314"/>
        <end position="316"/>
    </location>
</feature>
<feature type="strand" evidence="19">
    <location>
        <begin position="322"/>
        <end position="326"/>
    </location>
</feature>
<feature type="strand" evidence="19">
    <location>
        <begin position="332"/>
        <end position="342"/>
    </location>
</feature>
<feature type="strand" evidence="19">
    <location>
        <begin position="345"/>
        <end position="351"/>
    </location>
</feature>
<feature type="strand" evidence="19">
    <location>
        <begin position="359"/>
        <end position="363"/>
    </location>
</feature>
<feature type="helix" evidence="19">
    <location>
        <begin position="369"/>
        <end position="371"/>
    </location>
</feature>
<feature type="strand" evidence="19">
    <location>
        <begin position="373"/>
        <end position="377"/>
    </location>
</feature>
<feature type="strand" evidence="19">
    <location>
        <begin position="395"/>
        <end position="401"/>
    </location>
</feature>
<feature type="turn" evidence="19">
    <location>
        <begin position="402"/>
        <end position="405"/>
    </location>
</feature>
<feature type="turn" evidence="19">
    <location>
        <begin position="433"/>
        <end position="435"/>
    </location>
</feature>
<feature type="helix" evidence="19">
    <location>
        <begin position="439"/>
        <end position="441"/>
    </location>
</feature>
<feature type="strand" evidence="19">
    <location>
        <begin position="443"/>
        <end position="447"/>
    </location>
</feature>
<feature type="turn" evidence="19">
    <location>
        <begin position="449"/>
        <end position="451"/>
    </location>
</feature>
<feature type="helix" evidence="19">
    <location>
        <begin position="456"/>
        <end position="459"/>
    </location>
</feature>
<feature type="turn" evidence="19">
    <location>
        <begin position="463"/>
        <end position="465"/>
    </location>
</feature>
<feature type="strand" evidence="19">
    <location>
        <begin position="468"/>
        <end position="472"/>
    </location>
</feature>
<feature type="turn" evidence="19">
    <location>
        <begin position="473"/>
        <end position="475"/>
    </location>
</feature>
<feature type="strand" evidence="19">
    <location>
        <begin position="480"/>
        <end position="486"/>
    </location>
</feature>
<feature type="strand" evidence="19">
    <location>
        <begin position="488"/>
        <end position="490"/>
    </location>
</feature>
<feature type="strand" evidence="19">
    <location>
        <begin position="493"/>
        <end position="498"/>
    </location>
</feature>
<feature type="strand" evidence="19">
    <location>
        <begin position="500"/>
        <end position="502"/>
    </location>
</feature>
<feature type="helix" evidence="19">
    <location>
        <begin position="505"/>
        <end position="507"/>
    </location>
</feature>
<feature type="strand" evidence="19">
    <location>
        <begin position="509"/>
        <end position="515"/>
    </location>
</feature>
<feature type="strand" evidence="19">
    <location>
        <begin position="517"/>
        <end position="519"/>
    </location>
</feature>
<feature type="helix" evidence="19">
    <location>
        <begin position="533"/>
        <end position="549"/>
    </location>
</feature>
<feature type="helix" evidence="19">
    <location>
        <begin position="561"/>
        <end position="566"/>
    </location>
</feature>
<feature type="strand" evidence="19">
    <location>
        <begin position="571"/>
        <end position="576"/>
    </location>
</feature>
<feature type="strand" evidence="19">
    <location>
        <begin position="579"/>
        <end position="583"/>
    </location>
</feature>
<feature type="helix" evidence="19">
    <location>
        <begin position="587"/>
        <end position="613"/>
    </location>
</feature>
<feature type="helix" evidence="19">
    <location>
        <begin position="621"/>
        <end position="639"/>
    </location>
</feature>
<feature type="helix" evidence="19">
    <location>
        <begin position="642"/>
        <end position="644"/>
    </location>
</feature>
<feature type="helix" evidence="19">
    <location>
        <begin position="653"/>
        <end position="655"/>
    </location>
</feature>
<feature type="helix" evidence="19">
    <location>
        <begin position="657"/>
        <end position="676"/>
    </location>
</feature>
<feature type="turn" evidence="19">
    <location>
        <begin position="677"/>
        <end position="679"/>
    </location>
</feature>
<feature type="helix" evidence="19">
    <location>
        <begin position="683"/>
        <end position="703"/>
    </location>
</feature>
<feature type="helix" evidence="19">
    <location>
        <begin position="705"/>
        <end position="707"/>
    </location>
</feature>
<feature type="helix" evidence="19">
    <location>
        <begin position="715"/>
        <end position="721"/>
    </location>
</feature>
<feature type="strand" evidence="19">
    <location>
        <begin position="724"/>
        <end position="726"/>
    </location>
</feature>
<feature type="strand" evidence="19">
    <location>
        <begin position="733"/>
        <end position="737"/>
    </location>
</feature>
<feature type="helix" evidence="19">
    <location>
        <begin position="739"/>
        <end position="742"/>
    </location>
</feature>
<proteinExistence type="evidence at protein level"/>
<accession>P33775</accession>
<accession>D6VRQ4</accession>
<dbReference type="EC" id="2.4.1.109" evidence="4 10"/>
<dbReference type="EMBL" id="L19169">
    <property type="protein sequence ID" value="AAA02928.1"/>
    <property type="molecule type" value="Unassigned_DNA"/>
</dbReference>
<dbReference type="EMBL" id="X95644">
    <property type="protein sequence ID" value="CAA64917.1"/>
    <property type="molecule type" value="Genomic_DNA"/>
</dbReference>
<dbReference type="EMBL" id="Z74144">
    <property type="protein sequence ID" value="CAA98663.1"/>
    <property type="molecule type" value="Genomic_DNA"/>
</dbReference>
<dbReference type="EMBL" id="BK006938">
    <property type="protein sequence ID" value="DAA11764.1"/>
    <property type="molecule type" value="Genomic_DNA"/>
</dbReference>
<dbReference type="PIR" id="A47716">
    <property type="entry name" value="A47716"/>
</dbReference>
<dbReference type="RefSeq" id="NP_010188.1">
    <property type="nucleotide sequence ID" value="NM_001180154.1"/>
</dbReference>
<dbReference type="PDB" id="6P25">
    <property type="method" value="EM"/>
    <property type="resolution" value="3.20 A"/>
    <property type="chains" value="A=1-817"/>
</dbReference>
<dbReference type="PDB" id="6P2R">
    <property type="method" value="EM"/>
    <property type="resolution" value="3.20 A"/>
    <property type="chains" value="A=1-817"/>
</dbReference>
<dbReference type="PDBsum" id="6P25"/>
<dbReference type="PDBsum" id="6P2R"/>
<dbReference type="EMDB" id="EMD-20236"/>
<dbReference type="EMDB" id="EMD-20240"/>
<dbReference type="SMR" id="P33775"/>
<dbReference type="BioGRID" id="31966">
    <property type="interactions" value="248"/>
</dbReference>
<dbReference type="ComplexPortal" id="CPX-3036">
    <property type="entry name" value="PMT1-PMT2 dolichyl-phosphate-mannose-protein mannosyltransferase complex"/>
</dbReference>
<dbReference type="ComplexPortal" id="CPX-3037">
    <property type="entry name" value="PMT1-PMT3 dolichyl-phosphate-mannose-protein mannosyltransferase complex"/>
</dbReference>
<dbReference type="DIP" id="DIP-7911N"/>
<dbReference type="FunCoup" id="P33775">
    <property type="interactions" value="92"/>
</dbReference>
<dbReference type="IntAct" id="P33775">
    <property type="interactions" value="42"/>
</dbReference>
<dbReference type="MINT" id="P33775"/>
<dbReference type="STRING" id="4932.YDL095W"/>
<dbReference type="CAZy" id="GT39">
    <property type="family name" value="Glycosyltransferase Family 39"/>
</dbReference>
<dbReference type="TCDB" id="9.B.142.5.6">
    <property type="family name" value="the integral membrane glycosyltransferase family 39 (gt39) family"/>
</dbReference>
<dbReference type="GlyCosmos" id="P33775">
    <property type="glycosylation" value="3 sites, No reported glycans"/>
</dbReference>
<dbReference type="GlyGen" id="P33775">
    <property type="glycosylation" value="3 sites"/>
</dbReference>
<dbReference type="iPTMnet" id="P33775"/>
<dbReference type="PaxDb" id="4932-YDL095W"/>
<dbReference type="PeptideAtlas" id="P33775"/>
<dbReference type="EnsemblFungi" id="YDL095W_mRNA">
    <property type="protein sequence ID" value="YDL095W"/>
    <property type="gene ID" value="YDL095W"/>
</dbReference>
<dbReference type="GeneID" id="851462"/>
<dbReference type="KEGG" id="sce:YDL095W"/>
<dbReference type="AGR" id="SGD:S000002253"/>
<dbReference type="SGD" id="S000002253">
    <property type="gene designation" value="PMT1"/>
</dbReference>
<dbReference type="VEuPathDB" id="FungiDB:YDL095W"/>
<dbReference type="eggNOG" id="KOG3359">
    <property type="taxonomic scope" value="Eukaryota"/>
</dbReference>
<dbReference type="GeneTree" id="ENSGT00940000176667"/>
<dbReference type="HOGENOM" id="CLU_008438_2_0_1"/>
<dbReference type="InParanoid" id="P33775"/>
<dbReference type="OMA" id="KNVTPRL"/>
<dbReference type="OrthoDB" id="292747at2759"/>
<dbReference type="BioCyc" id="MetaCyc:YDL095W-MONOMER"/>
<dbReference type="BioCyc" id="YEAST:YDL095W-MONOMER"/>
<dbReference type="BRENDA" id="2.4.1.109">
    <property type="organism ID" value="984"/>
</dbReference>
<dbReference type="UniPathway" id="UPA00378"/>
<dbReference type="BioGRID-ORCS" id="851462">
    <property type="hits" value="10 hits in 10 CRISPR screens"/>
</dbReference>
<dbReference type="PRO" id="PR:P33775"/>
<dbReference type="Proteomes" id="UP000002311">
    <property type="component" value="Chromosome IV"/>
</dbReference>
<dbReference type="RNAct" id="P33775">
    <property type="molecule type" value="protein"/>
</dbReference>
<dbReference type="GO" id="GO:0097582">
    <property type="term" value="C:dolichyl-phosphate-mannose-protein mannosyltransferase Pmt1p-Pmt2p dimer complex"/>
    <property type="evidence" value="ECO:0000314"/>
    <property type="project" value="SGD"/>
</dbReference>
<dbReference type="GO" id="GO:0097583">
    <property type="term" value="C:dolichyl-phosphate-mannose-protein mannosyltransferase Pmt1p-Pmt3p dimer complex"/>
    <property type="evidence" value="ECO:0000314"/>
    <property type="project" value="SGD"/>
</dbReference>
<dbReference type="GO" id="GO:0005783">
    <property type="term" value="C:endoplasmic reticulum"/>
    <property type="evidence" value="ECO:0007005"/>
    <property type="project" value="SGD"/>
</dbReference>
<dbReference type="GO" id="GO:0005789">
    <property type="term" value="C:endoplasmic reticulum membrane"/>
    <property type="evidence" value="ECO:0000250"/>
    <property type="project" value="ComplexPortal"/>
</dbReference>
<dbReference type="GO" id="GO:0004169">
    <property type="term" value="F:dolichyl-phosphate-mannose-protein mannosyltransferase activity"/>
    <property type="evidence" value="ECO:0000314"/>
    <property type="project" value="SGD"/>
</dbReference>
<dbReference type="GO" id="GO:0036503">
    <property type="term" value="P:ERAD pathway"/>
    <property type="evidence" value="ECO:0000315"/>
    <property type="project" value="SGD"/>
</dbReference>
<dbReference type="GO" id="GO:0009272">
    <property type="term" value="P:fungal-type cell wall biogenesis"/>
    <property type="evidence" value="ECO:0000314"/>
    <property type="project" value="ComplexPortal"/>
</dbReference>
<dbReference type="GO" id="GO:0032527">
    <property type="term" value="P:protein exit from endoplasmic reticulum"/>
    <property type="evidence" value="ECO:0000316"/>
    <property type="project" value="SGD"/>
</dbReference>
<dbReference type="GO" id="GO:0035269">
    <property type="term" value="P:protein O-linked mannosylation"/>
    <property type="evidence" value="ECO:0000314"/>
    <property type="project" value="ComplexPortal"/>
</dbReference>
<dbReference type="GO" id="GO:1900101">
    <property type="term" value="P:regulation of endoplasmic reticulum unfolded protein response"/>
    <property type="evidence" value="ECO:0000315"/>
    <property type="project" value="SGD"/>
</dbReference>
<dbReference type="CDD" id="cd23283">
    <property type="entry name" value="beta-trefoil_MIR_PMT1-like"/>
    <property type="match status" value="1"/>
</dbReference>
<dbReference type="FunFam" id="2.80.10.50:FF:000034">
    <property type="entry name" value="Dolichyl-phosphate-mannose-protein mannosyltransferase 1"/>
    <property type="match status" value="1"/>
</dbReference>
<dbReference type="Gene3D" id="2.80.10.50">
    <property type="match status" value="1"/>
</dbReference>
<dbReference type="InterPro" id="IPR027005">
    <property type="entry name" value="GlyclTrfase_39-like"/>
</dbReference>
<dbReference type="InterPro" id="IPR003342">
    <property type="entry name" value="Glyco_trans_39/83"/>
</dbReference>
<dbReference type="InterPro" id="IPR036300">
    <property type="entry name" value="MIR_dom_sf"/>
</dbReference>
<dbReference type="InterPro" id="IPR016093">
    <property type="entry name" value="MIR_motif"/>
</dbReference>
<dbReference type="InterPro" id="IPR032421">
    <property type="entry name" value="PMT_4TMC"/>
</dbReference>
<dbReference type="PANTHER" id="PTHR10050">
    <property type="entry name" value="DOLICHYL-PHOSPHATE-MANNOSE--PROTEIN MANNOSYLTRANSFERASE"/>
    <property type="match status" value="1"/>
</dbReference>
<dbReference type="PANTHER" id="PTHR10050:SF50">
    <property type="entry name" value="DOLICHYL-PHOSPHATE-MANNOSE--PROTEIN MANNOSYLTRANSFERASE 1-RELATED"/>
    <property type="match status" value="1"/>
</dbReference>
<dbReference type="Pfam" id="PF02815">
    <property type="entry name" value="MIR"/>
    <property type="match status" value="1"/>
</dbReference>
<dbReference type="Pfam" id="PF02366">
    <property type="entry name" value="PMT"/>
    <property type="match status" value="1"/>
</dbReference>
<dbReference type="Pfam" id="PF16192">
    <property type="entry name" value="PMT_4TMC"/>
    <property type="match status" value="1"/>
</dbReference>
<dbReference type="SMART" id="SM00472">
    <property type="entry name" value="MIR"/>
    <property type="match status" value="3"/>
</dbReference>
<dbReference type="SUPFAM" id="SSF82109">
    <property type="entry name" value="MIR domain"/>
    <property type="match status" value="1"/>
</dbReference>
<dbReference type="PROSITE" id="PS50919">
    <property type="entry name" value="MIR"/>
    <property type="match status" value="3"/>
</dbReference>
<gene>
    <name evidence="15" type="primary">PMT1</name>
    <name evidence="17" type="ordered locus">YDL095W</name>
    <name evidence="17" type="ORF">D2390</name>
</gene>
<comment type="function">
    <text evidence="4 7 10 11 13">Protein O-mannosyltransferase involved in O-glycosylation which is essential for cell wall rigidity. Forms a heterodimeric complex with PMT2 and more rarely with PMT3 to transfer mannose from Dol-P-mannose to Ser or Thr residues on proteins. The PMT1-PMT2 complex participates in oxidative protein folding, ER-associated protein degradation (ERAD), as well as ER export. Required for incorporation of proteins in the cell wall.</text>
</comment>
<comment type="catalytic activity">
    <reaction evidence="4 10">
        <text>a di-trans,poly-cis-dolichyl beta-D-mannosyl phosphate + L-seryl-[protein] = 3-O-(alpha-D-mannosyl)-L-seryl-[protein] + a di-trans,poly-cis-dolichyl phosphate + H(+)</text>
        <dbReference type="Rhea" id="RHEA:17377"/>
        <dbReference type="Rhea" id="RHEA-COMP:9863"/>
        <dbReference type="Rhea" id="RHEA-COMP:13546"/>
        <dbReference type="Rhea" id="RHEA-COMP:19498"/>
        <dbReference type="Rhea" id="RHEA-COMP:19501"/>
        <dbReference type="ChEBI" id="CHEBI:15378"/>
        <dbReference type="ChEBI" id="CHEBI:29999"/>
        <dbReference type="ChEBI" id="CHEBI:57683"/>
        <dbReference type="ChEBI" id="CHEBI:58211"/>
        <dbReference type="ChEBI" id="CHEBI:137321"/>
        <dbReference type="EC" id="2.4.1.109"/>
    </reaction>
</comment>
<comment type="catalytic activity">
    <reaction evidence="4 10">
        <text>a di-trans,poly-cis-dolichyl beta-D-mannosyl phosphate + L-threonyl-[protein] = 3-O-(alpha-D-mannosyl)-L-threonyl-[protein] + a di-trans,poly-cis-dolichyl phosphate + H(+)</text>
        <dbReference type="Rhea" id="RHEA:53396"/>
        <dbReference type="Rhea" id="RHEA-COMP:11060"/>
        <dbReference type="Rhea" id="RHEA-COMP:13547"/>
        <dbReference type="Rhea" id="RHEA-COMP:19498"/>
        <dbReference type="Rhea" id="RHEA-COMP:19501"/>
        <dbReference type="ChEBI" id="CHEBI:15378"/>
        <dbReference type="ChEBI" id="CHEBI:30013"/>
        <dbReference type="ChEBI" id="CHEBI:57683"/>
        <dbReference type="ChEBI" id="CHEBI:58211"/>
        <dbReference type="ChEBI" id="CHEBI:137323"/>
        <dbReference type="EC" id="2.4.1.109"/>
    </reaction>
</comment>
<comment type="pathway">
    <text evidence="16">Protein modification; protein glycosylation.</text>
</comment>
<comment type="subunit">
    <text evidence="5 8 11">PMT1 and PMT2 form a functional heterodimer. The complex interacts with endoplasmic reticulum proteins EMP24, ERV25, ERP1, ERP2, CDC48, HRD1, USA1, YOS9, ERO1, PDI1, UBR1, Cue4, DFM1 and TED1. Forms also a minor complex with PMT3.</text>
</comment>
<comment type="interaction">
    <interactant intactId="EBI-13567">
        <id>P33775</id>
    </interactant>
    <interactant intactId="EBI-13573">
        <id>P31382</id>
        <label>PMT2</label>
    </interactant>
    <organismsDiffer>false</organismsDiffer>
    <experiments>7</experiments>
</comment>
<comment type="interaction">
    <interactant intactId="EBI-13567">
        <id>P33775</id>
    </interactant>
    <interactant intactId="EBI-13579">
        <id>P47190</id>
        <label>PMT3</label>
    </interactant>
    <organismsDiffer>false</organismsDiffer>
    <experiments>3</experiments>
</comment>
<comment type="subcellular location">
    <subcellularLocation>
        <location evidence="14">Endoplasmic reticulum membrane</location>
        <topology evidence="3">Multi-pass membrane protein</topology>
    </subcellularLocation>
</comment>
<comment type="domain">
    <text evidence="4">The large luminal loop 5 is essential for mannosyltransferase activity but not for PMT1-PMT2 complex formation.</text>
</comment>
<comment type="disruption phenotype">
    <text evidence="12">Affects glycosylation of chitinase and increases sensitivity to calcofluor white and caffeine.</text>
</comment>
<comment type="miscellaneous">
    <text evidence="6">Present with 41500 molecules/cell in log phase SD medium.</text>
</comment>
<comment type="similarity">
    <text evidence="16">Belongs to the glycosyltransferase 39 family.</text>
</comment>
<protein>
    <recommendedName>
        <fullName evidence="16">Dolichyl-phosphate-mannose--protein mannosyltransferase 1</fullName>
        <ecNumber evidence="4 10">2.4.1.109</ecNumber>
    </recommendedName>
</protein>
<sequence length="817" mass="92675">MSEEKTYKRVEQDDPVPELDIKQGPVRPFIVTDPSAELASLRTMVTLKEKLLVACLAVFTAVIRLHGLAWPDSVVFDEVHFGGFASQYIRGTYFMDVHPPLAKMLYAGVASLGGFQGDFDFENIGDSFPSTTPYVLMRFFSASLGALTVILMYMTLRYSGVRMWVALMSAICFAVENSYVTISRYILLDAPLMFFIAAAVYSFKKYEMYPANSLNAYKSLLATGIALGMASSSKWVGLFTVTWVGLLCIWRLWFMIGDLTKSSKSIFKVAFAKLAFLLGVPFALYLVFFYIHFQSLTLDGDGASFFSPEFRSTLKNNKIPQNVVADVGIGSIISLRHLSTMGGYLHSHSHNYPAGSEQQQSTLYPHMDANNDWLLELYNAPGESLTTFQNLTDGTKVRLFHTVTRCRLHSHDHKPPVSESSDWQKEVSCYGYSGFDGDANDDWVVEIDKKNSAPGVAQERVIALDTKFRLRHAMTGCYLFSHEVKLPAWGFEQQEVTCASSGRHDLTLWYVENNSNPLLPEDTKRISYKPASFISKFIESHKKMWHINKNLVEPHVYESQPTSWPFLLRGISYWGENNRNVYLLGNAIVWWAVTAFIGIFGLIVITELFSWQLGKPILKDSKVVNFHVQVIHYLLGFAVHYAPSFLMQRQMFLHHYLPAYYFGILALGHALDIIVSYVFRSKRQMGYAVVITFLAASVYFFKSFSPIIYGTPWTQELCQKSQWLSGWDYNCNTYFSSLEEYKNQTLTKRESQPAATSTVEEITIEGDGPSYEDLMNEDGKKIFKDTEGNELDPEVVKKMLEEEGANILKVEKRAVLE</sequence>
<keyword id="KW-0002">3D-structure</keyword>
<keyword id="KW-0007">Acetylation</keyword>
<keyword id="KW-0903">Direct protein sequencing</keyword>
<keyword id="KW-0256">Endoplasmic reticulum</keyword>
<keyword id="KW-0325">Glycoprotein</keyword>
<keyword id="KW-0328">Glycosyltransferase</keyword>
<keyword id="KW-0472">Membrane</keyword>
<keyword id="KW-1185">Reference proteome</keyword>
<keyword id="KW-0677">Repeat</keyword>
<keyword id="KW-0808">Transferase</keyword>
<keyword id="KW-0812">Transmembrane</keyword>
<keyword id="KW-1133">Transmembrane helix</keyword>
<evidence type="ECO:0000255" key="1"/>
<evidence type="ECO:0000255" key="2">
    <source>
        <dbReference type="PROSITE-ProRule" id="PRU00131"/>
    </source>
</evidence>
<evidence type="ECO:0000269" key="3">
    <source>
    </source>
</evidence>
<evidence type="ECO:0000269" key="4">
    <source>
    </source>
</evidence>
<evidence type="ECO:0000269" key="5">
    <source>
    </source>
</evidence>
<evidence type="ECO:0000269" key="6">
    <source>
    </source>
</evidence>
<evidence type="ECO:0000269" key="7">
    <source>
    </source>
</evidence>
<evidence type="ECO:0000269" key="8">
    <source>
    </source>
</evidence>
<evidence type="ECO:0000269" key="9">
    <source>
    </source>
</evidence>
<evidence type="ECO:0000269" key="10">
    <source>
    </source>
</evidence>
<evidence type="ECO:0000269" key="11">
    <source>
    </source>
</evidence>
<evidence type="ECO:0000269" key="12">
    <source>
    </source>
</evidence>
<evidence type="ECO:0000269" key="13">
    <source>
    </source>
</evidence>
<evidence type="ECO:0000303" key="14">
    <source>
    </source>
</evidence>
<evidence type="ECO:0000303" key="15">
    <source>
    </source>
</evidence>
<evidence type="ECO:0000305" key="16"/>
<evidence type="ECO:0000312" key="17">
    <source>
        <dbReference type="SGD" id="S000002253"/>
    </source>
</evidence>
<evidence type="ECO:0007744" key="18">
    <source>
    </source>
</evidence>
<evidence type="ECO:0007829" key="19">
    <source>
        <dbReference type="PDB" id="6P25"/>
    </source>
</evidence>
<name>PMT1_YEAST</name>